<gene>
    <name evidence="1" type="primary">pth</name>
    <name type="ordered locus">RrIowa_1106</name>
</gene>
<evidence type="ECO:0000255" key="1">
    <source>
        <dbReference type="HAMAP-Rule" id="MF_00083"/>
    </source>
</evidence>
<organism>
    <name type="scientific">Rickettsia rickettsii (strain Iowa)</name>
    <dbReference type="NCBI Taxonomy" id="452659"/>
    <lineage>
        <taxon>Bacteria</taxon>
        <taxon>Pseudomonadati</taxon>
        <taxon>Pseudomonadota</taxon>
        <taxon>Alphaproteobacteria</taxon>
        <taxon>Rickettsiales</taxon>
        <taxon>Rickettsiaceae</taxon>
        <taxon>Rickettsieae</taxon>
        <taxon>Rickettsia</taxon>
        <taxon>spotted fever group</taxon>
    </lineage>
</organism>
<comment type="function">
    <text evidence="1">Hydrolyzes ribosome-free peptidyl-tRNAs (with 1 or more amino acids incorporated), which drop off the ribosome during protein synthesis, or as a result of ribosome stalling.</text>
</comment>
<comment type="function">
    <text evidence="1">Catalyzes the release of premature peptidyl moieties from peptidyl-tRNA molecules trapped in stalled 50S ribosomal subunits, and thus maintains levels of free tRNAs and 50S ribosomes.</text>
</comment>
<comment type="catalytic activity">
    <reaction evidence="1">
        <text>an N-acyl-L-alpha-aminoacyl-tRNA + H2O = an N-acyl-L-amino acid + a tRNA + H(+)</text>
        <dbReference type="Rhea" id="RHEA:54448"/>
        <dbReference type="Rhea" id="RHEA-COMP:10123"/>
        <dbReference type="Rhea" id="RHEA-COMP:13883"/>
        <dbReference type="ChEBI" id="CHEBI:15377"/>
        <dbReference type="ChEBI" id="CHEBI:15378"/>
        <dbReference type="ChEBI" id="CHEBI:59874"/>
        <dbReference type="ChEBI" id="CHEBI:78442"/>
        <dbReference type="ChEBI" id="CHEBI:138191"/>
        <dbReference type="EC" id="3.1.1.29"/>
    </reaction>
</comment>
<comment type="subunit">
    <text evidence="1">Monomer.</text>
</comment>
<comment type="subcellular location">
    <subcellularLocation>
        <location evidence="1">Cytoplasm</location>
    </subcellularLocation>
</comment>
<comment type="similarity">
    <text evidence="1">Belongs to the PTH family.</text>
</comment>
<name>PTH_RICRO</name>
<dbReference type="EC" id="3.1.1.29" evidence="1"/>
<dbReference type="EMBL" id="CP000766">
    <property type="protein sequence ID" value="ABY72896.1"/>
    <property type="molecule type" value="Genomic_DNA"/>
</dbReference>
<dbReference type="RefSeq" id="WP_012151089.1">
    <property type="nucleotide sequence ID" value="NC_010263.3"/>
</dbReference>
<dbReference type="SMR" id="B0BUI6"/>
<dbReference type="GeneID" id="79937603"/>
<dbReference type="KEGG" id="rrj:RrIowa_1106"/>
<dbReference type="eggNOG" id="COG0193">
    <property type="taxonomic scope" value="Bacteria"/>
</dbReference>
<dbReference type="HOGENOM" id="CLU_062456_2_2_5"/>
<dbReference type="Proteomes" id="UP000000796">
    <property type="component" value="Chromosome"/>
</dbReference>
<dbReference type="GO" id="GO:0005737">
    <property type="term" value="C:cytoplasm"/>
    <property type="evidence" value="ECO:0007669"/>
    <property type="project" value="UniProtKB-SubCell"/>
</dbReference>
<dbReference type="GO" id="GO:0004045">
    <property type="term" value="F:peptidyl-tRNA hydrolase activity"/>
    <property type="evidence" value="ECO:0007669"/>
    <property type="project" value="UniProtKB-UniRule"/>
</dbReference>
<dbReference type="GO" id="GO:0000049">
    <property type="term" value="F:tRNA binding"/>
    <property type="evidence" value="ECO:0007669"/>
    <property type="project" value="UniProtKB-UniRule"/>
</dbReference>
<dbReference type="GO" id="GO:0006515">
    <property type="term" value="P:protein quality control for misfolded or incompletely synthesized proteins"/>
    <property type="evidence" value="ECO:0007669"/>
    <property type="project" value="UniProtKB-UniRule"/>
</dbReference>
<dbReference type="GO" id="GO:0072344">
    <property type="term" value="P:rescue of stalled ribosome"/>
    <property type="evidence" value="ECO:0007669"/>
    <property type="project" value="UniProtKB-UniRule"/>
</dbReference>
<dbReference type="CDD" id="cd00462">
    <property type="entry name" value="PTH"/>
    <property type="match status" value="1"/>
</dbReference>
<dbReference type="FunFam" id="3.40.50.1470:FF:000001">
    <property type="entry name" value="Peptidyl-tRNA hydrolase"/>
    <property type="match status" value="1"/>
</dbReference>
<dbReference type="Gene3D" id="3.40.50.1470">
    <property type="entry name" value="Peptidyl-tRNA hydrolase"/>
    <property type="match status" value="1"/>
</dbReference>
<dbReference type="HAMAP" id="MF_00083">
    <property type="entry name" value="Pept_tRNA_hydro_bact"/>
    <property type="match status" value="1"/>
</dbReference>
<dbReference type="InterPro" id="IPR001328">
    <property type="entry name" value="Pept_tRNA_hydro"/>
</dbReference>
<dbReference type="InterPro" id="IPR018171">
    <property type="entry name" value="Pept_tRNA_hydro_CS"/>
</dbReference>
<dbReference type="InterPro" id="IPR036416">
    <property type="entry name" value="Pept_tRNA_hydro_sf"/>
</dbReference>
<dbReference type="NCBIfam" id="TIGR00447">
    <property type="entry name" value="pth"/>
    <property type="match status" value="1"/>
</dbReference>
<dbReference type="PANTHER" id="PTHR17224">
    <property type="entry name" value="PEPTIDYL-TRNA HYDROLASE"/>
    <property type="match status" value="1"/>
</dbReference>
<dbReference type="PANTHER" id="PTHR17224:SF1">
    <property type="entry name" value="PEPTIDYL-TRNA HYDROLASE"/>
    <property type="match status" value="1"/>
</dbReference>
<dbReference type="Pfam" id="PF01195">
    <property type="entry name" value="Pept_tRNA_hydro"/>
    <property type="match status" value="1"/>
</dbReference>
<dbReference type="SUPFAM" id="SSF53178">
    <property type="entry name" value="Peptidyl-tRNA hydrolase-like"/>
    <property type="match status" value="1"/>
</dbReference>
<dbReference type="PROSITE" id="PS01195">
    <property type="entry name" value="PEPT_TRNA_HYDROL_1"/>
    <property type="match status" value="1"/>
</dbReference>
<dbReference type="PROSITE" id="PS01196">
    <property type="entry name" value="PEPT_TRNA_HYDROL_2"/>
    <property type="match status" value="1"/>
</dbReference>
<protein>
    <recommendedName>
        <fullName evidence="1">Peptidyl-tRNA hydrolase</fullName>
        <shortName evidence="1">Pth</shortName>
        <ecNumber evidence="1">3.1.1.29</ecNumber>
    </recommendedName>
</protein>
<accession>B0BUI6</accession>
<feature type="chain" id="PRO_1000075352" description="Peptidyl-tRNA hydrolase">
    <location>
        <begin position="1"/>
        <end position="185"/>
    </location>
</feature>
<feature type="active site" description="Proton acceptor" evidence="1">
    <location>
        <position position="19"/>
    </location>
</feature>
<feature type="binding site" evidence="1">
    <location>
        <position position="14"/>
    </location>
    <ligand>
        <name>tRNA</name>
        <dbReference type="ChEBI" id="CHEBI:17843"/>
    </ligand>
</feature>
<feature type="binding site" evidence="1">
    <location>
        <position position="65"/>
    </location>
    <ligand>
        <name>tRNA</name>
        <dbReference type="ChEBI" id="CHEBI:17843"/>
    </ligand>
</feature>
<feature type="binding site" evidence="1">
    <location>
        <position position="67"/>
    </location>
    <ligand>
        <name>tRNA</name>
        <dbReference type="ChEBI" id="CHEBI:17843"/>
    </ligand>
</feature>
<feature type="binding site" evidence="1">
    <location>
        <position position="113"/>
    </location>
    <ligand>
        <name>tRNA</name>
        <dbReference type="ChEBI" id="CHEBI:17843"/>
    </ligand>
</feature>
<feature type="site" description="Discriminates between blocked and unblocked aminoacyl-tRNA" evidence="1">
    <location>
        <position position="9"/>
    </location>
</feature>
<feature type="site" description="Stabilizes the basic form of H active site to accept a proton" evidence="1">
    <location>
        <position position="92"/>
    </location>
</feature>
<reference key="1">
    <citation type="journal article" date="2008" name="Infect. Immun.">
        <title>Genomic comparison of virulent Rickettsia rickettsii Sheila Smith and avirulent Rickettsia rickettsii Iowa.</title>
        <authorList>
            <person name="Ellison D.W."/>
            <person name="Clark T.R."/>
            <person name="Sturdevant D.E."/>
            <person name="Virtaneva K."/>
            <person name="Porcella S.F."/>
            <person name="Hackstadt T."/>
        </authorList>
    </citation>
    <scope>NUCLEOTIDE SEQUENCE [LARGE SCALE GENOMIC DNA]</scope>
    <source>
        <strain>Iowa</strain>
    </source>
</reference>
<keyword id="KW-0963">Cytoplasm</keyword>
<keyword id="KW-0378">Hydrolase</keyword>
<keyword id="KW-0694">RNA-binding</keyword>
<keyword id="KW-0820">tRNA-binding</keyword>
<sequence>MLLVIGLGNPGKEYQYTRHNVGFIAIEKIANQYNSSFSTKKKFNCEIAETISYGQKIIFIKPTTYMNLSGKSVISVKTYYNIYPAKSFVIHDDIDLETGRVKFKTGGGNGGHNGLKSIDGVIGNNYNRIRIGVGRPQNNQDLADYVLNHFSKPEYKTVMQAIDRITSNFGLILENKLEEFKNKMA</sequence>
<proteinExistence type="inferred from homology"/>